<reference key="1">
    <citation type="submission" date="2006-12" db="EMBL/GenBank/DDBJ databases">
        <title>Complete sequence of Acidovorax avenae subsp. citrulli AAC00-1.</title>
        <authorList>
            <person name="Copeland A."/>
            <person name="Lucas S."/>
            <person name="Lapidus A."/>
            <person name="Barry K."/>
            <person name="Detter J.C."/>
            <person name="Glavina del Rio T."/>
            <person name="Dalin E."/>
            <person name="Tice H."/>
            <person name="Pitluck S."/>
            <person name="Kiss H."/>
            <person name="Brettin T."/>
            <person name="Bruce D."/>
            <person name="Han C."/>
            <person name="Tapia R."/>
            <person name="Gilna P."/>
            <person name="Schmutz J."/>
            <person name="Larimer F."/>
            <person name="Land M."/>
            <person name="Hauser L."/>
            <person name="Kyrpides N."/>
            <person name="Kim E."/>
            <person name="Stahl D."/>
            <person name="Richardson P."/>
        </authorList>
    </citation>
    <scope>NUCLEOTIDE SEQUENCE [LARGE SCALE GENOMIC DNA]</scope>
    <source>
        <strain>AAC00-1</strain>
    </source>
</reference>
<keyword id="KW-0066">ATP synthesis</keyword>
<keyword id="KW-0997">Cell inner membrane</keyword>
<keyword id="KW-1003">Cell membrane</keyword>
<keyword id="KW-0138">CF(0)</keyword>
<keyword id="KW-0375">Hydrogen ion transport</keyword>
<keyword id="KW-0406">Ion transport</keyword>
<keyword id="KW-0472">Membrane</keyword>
<keyword id="KW-0812">Transmembrane</keyword>
<keyword id="KW-1133">Transmembrane helix</keyword>
<keyword id="KW-0813">Transport</keyword>
<protein>
    <recommendedName>
        <fullName evidence="1">ATP synthase subunit b</fullName>
    </recommendedName>
    <alternativeName>
        <fullName evidence="1">ATP synthase F(0) sector subunit b</fullName>
    </alternativeName>
    <alternativeName>
        <fullName evidence="1">ATPase subunit I</fullName>
    </alternativeName>
    <alternativeName>
        <fullName evidence="1">F-type ATPase subunit b</fullName>
        <shortName evidence="1">F-ATPase subunit b</shortName>
    </alternativeName>
</protein>
<proteinExistence type="inferred from homology"/>
<gene>
    <name evidence="1" type="primary">atpF</name>
    <name type="ordered locus">Aave_0368</name>
</gene>
<evidence type="ECO:0000255" key="1">
    <source>
        <dbReference type="HAMAP-Rule" id="MF_01398"/>
    </source>
</evidence>
<sequence length="156" mass="17097">MSINATLFVQAIVFLILVLFTMKFVWPPIAKALDERAQKIAEGLAAADRAKSELVAVNQRVETELAQTRNETASRLADAERRAQAIIEEAKARATEEGNKIVAAARAEAEQQTIQAREALREQVAALAVKGAEQILRKEVNAGVHADLLNRLKTEL</sequence>
<organism>
    <name type="scientific">Paracidovorax citrulli (strain AAC00-1)</name>
    <name type="common">Acidovorax citrulli</name>
    <dbReference type="NCBI Taxonomy" id="397945"/>
    <lineage>
        <taxon>Bacteria</taxon>
        <taxon>Pseudomonadati</taxon>
        <taxon>Pseudomonadota</taxon>
        <taxon>Betaproteobacteria</taxon>
        <taxon>Burkholderiales</taxon>
        <taxon>Comamonadaceae</taxon>
        <taxon>Paracidovorax</taxon>
    </lineage>
</organism>
<name>ATPF_PARC0</name>
<accession>A1TJ37</accession>
<comment type="function">
    <text evidence="1">F(1)F(0) ATP synthase produces ATP from ADP in the presence of a proton or sodium gradient. F-type ATPases consist of two structural domains, F(1) containing the extramembraneous catalytic core and F(0) containing the membrane proton channel, linked together by a central stalk and a peripheral stalk. During catalysis, ATP synthesis in the catalytic domain of F(1) is coupled via a rotary mechanism of the central stalk subunits to proton translocation.</text>
</comment>
<comment type="function">
    <text evidence="1">Component of the F(0) channel, it forms part of the peripheral stalk, linking F(1) to F(0).</text>
</comment>
<comment type="subunit">
    <text evidence="1">F-type ATPases have 2 components, F(1) - the catalytic core - and F(0) - the membrane proton channel. F(1) has five subunits: alpha(3), beta(3), gamma(1), delta(1), epsilon(1). F(0) has three main subunits: a(1), b(2) and c(10-14). The alpha and beta chains form an alternating ring which encloses part of the gamma chain. F(1) is attached to F(0) by a central stalk formed by the gamma and epsilon chains, while a peripheral stalk is formed by the delta and b chains.</text>
</comment>
<comment type="subcellular location">
    <subcellularLocation>
        <location evidence="1">Cell inner membrane</location>
        <topology evidence="1">Single-pass membrane protein</topology>
    </subcellularLocation>
</comment>
<comment type="similarity">
    <text evidence="1">Belongs to the ATPase B chain family.</text>
</comment>
<feature type="chain" id="PRO_0000368286" description="ATP synthase subunit b">
    <location>
        <begin position="1"/>
        <end position="156"/>
    </location>
</feature>
<feature type="transmembrane region" description="Helical" evidence="1">
    <location>
        <begin position="7"/>
        <end position="27"/>
    </location>
</feature>
<dbReference type="EMBL" id="CP000512">
    <property type="protein sequence ID" value="ABM30975.1"/>
    <property type="molecule type" value="Genomic_DNA"/>
</dbReference>
<dbReference type="RefSeq" id="WP_011793552.1">
    <property type="nucleotide sequence ID" value="NC_008752.1"/>
</dbReference>
<dbReference type="SMR" id="A1TJ37"/>
<dbReference type="STRING" id="397945.Aave_0368"/>
<dbReference type="GeneID" id="79790176"/>
<dbReference type="KEGG" id="aav:Aave_0368"/>
<dbReference type="eggNOG" id="COG0711">
    <property type="taxonomic scope" value="Bacteria"/>
</dbReference>
<dbReference type="HOGENOM" id="CLU_079215_4_5_4"/>
<dbReference type="OrthoDB" id="9788020at2"/>
<dbReference type="Proteomes" id="UP000002596">
    <property type="component" value="Chromosome"/>
</dbReference>
<dbReference type="GO" id="GO:0005886">
    <property type="term" value="C:plasma membrane"/>
    <property type="evidence" value="ECO:0007669"/>
    <property type="project" value="UniProtKB-SubCell"/>
</dbReference>
<dbReference type="GO" id="GO:0045259">
    <property type="term" value="C:proton-transporting ATP synthase complex"/>
    <property type="evidence" value="ECO:0007669"/>
    <property type="project" value="UniProtKB-KW"/>
</dbReference>
<dbReference type="GO" id="GO:0046933">
    <property type="term" value="F:proton-transporting ATP synthase activity, rotational mechanism"/>
    <property type="evidence" value="ECO:0007669"/>
    <property type="project" value="UniProtKB-UniRule"/>
</dbReference>
<dbReference type="GO" id="GO:0046961">
    <property type="term" value="F:proton-transporting ATPase activity, rotational mechanism"/>
    <property type="evidence" value="ECO:0007669"/>
    <property type="project" value="TreeGrafter"/>
</dbReference>
<dbReference type="CDD" id="cd06503">
    <property type="entry name" value="ATP-synt_Fo_b"/>
    <property type="match status" value="1"/>
</dbReference>
<dbReference type="Gene3D" id="6.10.250.1580">
    <property type="match status" value="1"/>
</dbReference>
<dbReference type="HAMAP" id="MF_01398">
    <property type="entry name" value="ATP_synth_b_bprime"/>
    <property type="match status" value="1"/>
</dbReference>
<dbReference type="InterPro" id="IPR028987">
    <property type="entry name" value="ATP_synth_B-like_membr_sf"/>
</dbReference>
<dbReference type="InterPro" id="IPR002146">
    <property type="entry name" value="ATP_synth_b/b'su_bac/chlpt"/>
</dbReference>
<dbReference type="InterPro" id="IPR005864">
    <property type="entry name" value="ATP_synth_F0_bsu_bac"/>
</dbReference>
<dbReference type="InterPro" id="IPR050059">
    <property type="entry name" value="ATP_synthase_B_chain"/>
</dbReference>
<dbReference type="NCBIfam" id="TIGR01144">
    <property type="entry name" value="ATP_synt_b"/>
    <property type="match status" value="1"/>
</dbReference>
<dbReference type="NCBIfam" id="NF004411">
    <property type="entry name" value="PRK05759.1-2"/>
    <property type="match status" value="1"/>
</dbReference>
<dbReference type="PANTHER" id="PTHR33445:SF1">
    <property type="entry name" value="ATP SYNTHASE SUBUNIT B"/>
    <property type="match status" value="1"/>
</dbReference>
<dbReference type="PANTHER" id="PTHR33445">
    <property type="entry name" value="ATP SYNTHASE SUBUNIT B', CHLOROPLASTIC"/>
    <property type="match status" value="1"/>
</dbReference>
<dbReference type="Pfam" id="PF00430">
    <property type="entry name" value="ATP-synt_B"/>
    <property type="match status" value="1"/>
</dbReference>
<dbReference type="SUPFAM" id="SSF81573">
    <property type="entry name" value="F1F0 ATP synthase subunit B, membrane domain"/>
    <property type="match status" value="1"/>
</dbReference>